<name>CDKD1_ORYSI</name>
<sequence length="424" mass="47629">MASGDGGDDAGVKRVADRYLKREVLGEGTYGVVFKADDTKTGNTVAIKKIRLGKYKEGVNFTALREIKLLKELKDSNIIELIDAFPYKGNLHLVFEFMETDLEAVIRDRNIVLSPADTKSYIQMMLKGLAFCHKKWVLHRDMKPNNLLIGADGQLKLADFGLARIFGSPERNFTHQVFARWYRAPELLFGTKQYGSAVDIWAAGCIFAELLLRRPFLQGSSDIDQLGKIFAAFGTPKSSQWPDMVYLPDYVEYQFVSAPPLRSLFPMASDDALDLLSRMFTYDPKARITAQQALEHRYFLSVPAPTKPSQLPRPPPKGDSGNNKIPDLNLQDGPVVLSPPRKLRRVTAHEGMEVHMHRADRTEEHPSGARHMDDMSSQSSRIPMSVDVGAIFGTRPAPRPTLNSADKSRLKRKLDMDPEFGYTE</sequence>
<gene>
    <name type="primary">CDKD-1</name>
    <name type="synonym">R2</name>
    <name type="ORF">OsI_019159</name>
</gene>
<proteinExistence type="evidence at transcript level"/>
<comment type="catalytic activity">
    <reaction>
        <text>L-seryl-[protein] + ATP = O-phospho-L-seryl-[protein] + ADP + H(+)</text>
        <dbReference type="Rhea" id="RHEA:17989"/>
        <dbReference type="Rhea" id="RHEA-COMP:9863"/>
        <dbReference type="Rhea" id="RHEA-COMP:11604"/>
        <dbReference type="ChEBI" id="CHEBI:15378"/>
        <dbReference type="ChEBI" id="CHEBI:29999"/>
        <dbReference type="ChEBI" id="CHEBI:30616"/>
        <dbReference type="ChEBI" id="CHEBI:83421"/>
        <dbReference type="ChEBI" id="CHEBI:456216"/>
        <dbReference type="EC" id="2.7.11.22"/>
    </reaction>
</comment>
<comment type="catalytic activity">
    <reaction>
        <text>L-threonyl-[protein] + ATP = O-phospho-L-threonyl-[protein] + ADP + H(+)</text>
        <dbReference type="Rhea" id="RHEA:46608"/>
        <dbReference type="Rhea" id="RHEA-COMP:11060"/>
        <dbReference type="Rhea" id="RHEA-COMP:11605"/>
        <dbReference type="ChEBI" id="CHEBI:15378"/>
        <dbReference type="ChEBI" id="CHEBI:30013"/>
        <dbReference type="ChEBI" id="CHEBI:30616"/>
        <dbReference type="ChEBI" id="CHEBI:61977"/>
        <dbReference type="ChEBI" id="CHEBI:456216"/>
        <dbReference type="EC" id="2.7.11.22"/>
    </reaction>
</comment>
<comment type="catalytic activity">
    <reaction>
        <text>[DNA-directed RNA polymerase] + ATP = phospho-[DNA-directed RNA polymerase] + ADP + H(+)</text>
        <dbReference type="Rhea" id="RHEA:10216"/>
        <dbReference type="Rhea" id="RHEA-COMP:11321"/>
        <dbReference type="Rhea" id="RHEA-COMP:11322"/>
        <dbReference type="ChEBI" id="CHEBI:15378"/>
        <dbReference type="ChEBI" id="CHEBI:30616"/>
        <dbReference type="ChEBI" id="CHEBI:43176"/>
        <dbReference type="ChEBI" id="CHEBI:68546"/>
        <dbReference type="ChEBI" id="CHEBI:456216"/>
        <dbReference type="EC" id="2.7.11.23"/>
    </reaction>
</comment>
<comment type="subcellular location">
    <subcellularLocation>
        <location evidence="1">Nucleus</location>
    </subcellularLocation>
</comment>
<comment type="induction">
    <text>By gibberellic acid (GA3) and submergence.</text>
</comment>
<comment type="similarity">
    <text evidence="5">Belongs to the protein kinase superfamily. CMGC Ser/Thr protein kinase family. CDC2/CDKX subfamily.</text>
</comment>
<accession>A2Y4B6</accession>
<dbReference type="EC" id="2.7.11.22"/>
<dbReference type="EC" id="2.7.11.23"/>
<dbReference type="EMBL" id="CM000130">
    <property type="protein sequence ID" value="EAY97926.1"/>
    <property type="molecule type" value="Genomic_DNA"/>
</dbReference>
<dbReference type="SMR" id="A2Y4B6"/>
<dbReference type="STRING" id="39946.A2Y4B6"/>
<dbReference type="EnsemblPlants" id="BGIOSGA019809-TA">
    <property type="protein sequence ID" value="BGIOSGA019809-PA"/>
    <property type="gene ID" value="BGIOSGA019809"/>
</dbReference>
<dbReference type="Gramene" id="BGIOSGA019809-TA">
    <property type="protein sequence ID" value="BGIOSGA019809-PA"/>
    <property type="gene ID" value="BGIOSGA019809"/>
</dbReference>
<dbReference type="HOGENOM" id="CLU_000288_181_0_1"/>
<dbReference type="OMA" id="GIHHCHR"/>
<dbReference type="Proteomes" id="UP000007015">
    <property type="component" value="Chromosome 5"/>
</dbReference>
<dbReference type="GO" id="GO:0005737">
    <property type="term" value="C:cytoplasm"/>
    <property type="evidence" value="ECO:0007669"/>
    <property type="project" value="TreeGrafter"/>
</dbReference>
<dbReference type="GO" id="GO:0070985">
    <property type="term" value="C:transcription factor TFIIK complex"/>
    <property type="evidence" value="ECO:0007669"/>
    <property type="project" value="InterPro"/>
</dbReference>
<dbReference type="GO" id="GO:0005524">
    <property type="term" value="F:ATP binding"/>
    <property type="evidence" value="ECO:0007669"/>
    <property type="project" value="UniProtKB-KW"/>
</dbReference>
<dbReference type="GO" id="GO:0004693">
    <property type="term" value="F:cyclin-dependent protein serine/threonine kinase activity"/>
    <property type="evidence" value="ECO:0007669"/>
    <property type="project" value="UniProtKB-EC"/>
</dbReference>
<dbReference type="GO" id="GO:0106310">
    <property type="term" value="F:protein serine kinase activity"/>
    <property type="evidence" value="ECO:0007669"/>
    <property type="project" value="RHEA"/>
</dbReference>
<dbReference type="GO" id="GO:0008353">
    <property type="term" value="F:RNA polymerase II CTD heptapeptide repeat kinase activity"/>
    <property type="evidence" value="ECO:0007669"/>
    <property type="project" value="UniProtKB-EC"/>
</dbReference>
<dbReference type="GO" id="GO:0045944">
    <property type="term" value="P:positive regulation of transcription by RNA polymerase II"/>
    <property type="evidence" value="ECO:0007669"/>
    <property type="project" value="TreeGrafter"/>
</dbReference>
<dbReference type="CDD" id="cd07841">
    <property type="entry name" value="STKc_CDK7"/>
    <property type="match status" value="1"/>
</dbReference>
<dbReference type="FunFam" id="3.30.200.20:FF:000289">
    <property type="entry name" value="Cyclin-dependent kinase D-1"/>
    <property type="match status" value="1"/>
</dbReference>
<dbReference type="FunFam" id="1.10.510.10:FF:000097">
    <property type="entry name" value="Putative cyclin-dependent kinase 7"/>
    <property type="match status" value="1"/>
</dbReference>
<dbReference type="Gene3D" id="3.30.200.20">
    <property type="entry name" value="Phosphorylase Kinase, domain 1"/>
    <property type="match status" value="1"/>
</dbReference>
<dbReference type="Gene3D" id="1.10.510.10">
    <property type="entry name" value="Transferase(Phosphotransferase) domain 1"/>
    <property type="match status" value="1"/>
</dbReference>
<dbReference type="InterPro" id="IPR050108">
    <property type="entry name" value="CDK"/>
</dbReference>
<dbReference type="InterPro" id="IPR037770">
    <property type="entry name" value="CDK7"/>
</dbReference>
<dbReference type="InterPro" id="IPR011009">
    <property type="entry name" value="Kinase-like_dom_sf"/>
</dbReference>
<dbReference type="InterPro" id="IPR000719">
    <property type="entry name" value="Prot_kinase_dom"/>
</dbReference>
<dbReference type="InterPro" id="IPR017441">
    <property type="entry name" value="Protein_kinase_ATP_BS"/>
</dbReference>
<dbReference type="InterPro" id="IPR008271">
    <property type="entry name" value="Ser/Thr_kinase_AS"/>
</dbReference>
<dbReference type="PANTHER" id="PTHR24056">
    <property type="entry name" value="CELL DIVISION PROTEIN KINASE"/>
    <property type="match status" value="1"/>
</dbReference>
<dbReference type="PANTHER" id="PTHR24056:SF0">
    <property type="entry name" value="CYCLIN-DEPENDENT KINASE 7"/>
    <property type="match status" value="1"/>
</dbReference>
<dbReference type="Pfam" id="PF00069">
    <property type="entry name" value="Pkinase"/>
    <property type="match status" value="1"/>
</dbReference>
<dbReference type="SMART" id="SM00220">
    <property type="entry name" value="S_TKc"/>
    <property type="match status" value="1"/>
</dbReference>
<dbReference type="SUPFAM" id="SSF56112">
    <property type="entry name" value="Protein kinase-like (PK-like)"/>
    <property type="match status" value="1"/>
</dbReference>
<dbReference type="PROSITE" id="PS00107">
    <property type="entry name" value="PROTEIN_KINASE_ATP"/>
    <property type="match status" value="1"/>
</dbReference>
<dbReference type="PROSITE" id="PS50011">
    <property type="entry name" value="PROTEIN_KINASE_DOM"/>
    <property type="match status" value="1"/>
</dbReference>
<dbReference type="PROSITE" id="PS00108">
    <property type="entry name" value="PROTEIN_KINASE_ST"/>
    <property type="match status" value="1"/>
</dbReference>
<organism>
    <name type="scientific">Oryza sativa subsp. indica</name>
    <name type="common">Rice</name>
    <dbReference type="NCBI Taxonomy" id="39946"/>
    <lineage>
        <taxon>Eukaryota</taxon>
        <taxon>Viridiplantae</taxon>
        <taxon>Streptophyta</taxon>
        <taxon>Embryophyta</taxon>
        <taxon>Tracheophyta</taxon>
        <taxon>Spermatophyta</taxon>
        <taxon>Magnoliopsida</taxon>
        <taxon>Liliopsida</taxon>
        <taxon>Poales</taxon>
        <taxon>Poaceae</taxon>
        <taxon>BOP clade</taxon>
        <taxon>Oryzoideae</taxon>
        <taxon>Oryzeae</taxon>
        <taxon>Oryzinae</taxon>
        <taxon>Oryza</taxon>
        <taxon>Oryza sativa</taxon>
    </lineage>
</organism>
<feature type="chain" id="PRO_0000296103" description="Cyclin-dependent kinase D-1">
    <location>
        <begin position="1"/>
        <end position="424"/>
    </location>
</feature>
<feature type="domain" description="Protein kinase" evidence="2">
    <location>
        <begin position="19"/>
        <end position="299"/>
    </location>
</feature>
<feature type="region of interest" description="Disordered" evidence="4">
    <location>
        <begin position="303"/>
        <end position="337"/>
    </location>
</feature>
<feature type="region of interest" description="Disordered" evidence="4">
    <location>
        <begin position="359"/>
        <end position="424"/>
    </location>
</feature>
<feature type="compositionally biased region" description="Basic and acidic residues" evidence="4">
    <location>
        <begin position="359"/>
        <end position="374"/>
    </location>
</feature>
<feature type="active site" description="Proton acceptor" evidence="2 3">
    <location>
        <position position="141"/>
    </location>
</feature>
<feature type="binding site" evidence="2">
    <location>
        <begin position="25"/>
        <end position="33"/>
    </location>
    <ligand>
        <name>ATP</name>
        <dbReference type="ChEBI" id="CHEBI:30616"/>
    </ligand>
</feature>
<feature type="binding site" evidence="2">
    <location>
        <position position="48"/>
    </location>
    <ligand>
        <name>ATP</name>
        <dbReference type="ChEBI" id="CHEBI:30616"/>
    </ligand>
</feature>
<feature type="modified residue" description="Phosphothreonine" evidence="1">
    <location>
        <position position="29"/>
    </location>
</feature>
<feature type="modified residue" description="Phosphotyrosine" evidence="1">
    <location>
        <position position="30"/>
    </location>
</feature>
<feature type="modified residue" description="Phosphoserine" evidence="1">
    <location>
        <position position="168"/>
    </location>
</feature>
<feature type="modified residue" description="Phosphothreonine" evidence="1">
    <location>
        <position position="174"/>
    </location>
</feature>
<protein>
    <recommendedName>
        <fullName>Cyclin-dependent kinase D-1</fullName>
        <shortName>CDKD;1</shortName>
        <ecNumber>2.7.11.22</ecNumber>
        <ecNumber>2.7.11.23</ecNumber>
    </recommendedName>
    <alternativeName>
        <fullName>CDC2+/CDC28-related protein kinase R2</fullName>
    </alternativeName>
    <alternativeName>
        <fullName>CDK-activating kinase R2</fullName>
        <shortName>CAK-R2</shortName>
    </alternativeName>
</protein>
<keyword id="KW-0067">ATP-binding</keyword>
<keyword id="KW-0418">Kinase</keyword>
<keyword id="KW-0547">Nucleotide-binding</keyword>
<keyword id="KW-0539">Nucleus</keyword>
<keyword id="KW-0597">Phosphoprotein</keyword>
<keyword id="KW-1185">Reference proteome</keyword>
<keyword id="KW-0723">Serine/threonine-protein kinase</keyword>
<keyword id="KW-0808">Transferase</keyword>
<reference key="1">
    <citation type="journal article" date="2005" name="PLoS Biol.">
        <title>The genomes of Oryza sativa: a history of duplications.</title>
        <authorList>
            <person name="Yu J."/>
            <person name="Wang J."/>
            <person name="Lin W."/>
            <person name="Li S."/>
            <person name="Li H."/>
            <person name="Zhou J."/>
            <person name="Ni P."/>
            <person name="Dong W."/>
            <person name="Hu S."/>
            <person name="Zeng C."/>
            <person name="Zhang J."/>
            <person name="Zhang Y."/>
            <person name="Li R."/>
            <person name="Xu Z."/>
            <person name="Li S."/>
            <person name="Li X."/>
            <person name="Zheng H."/>
            <person name="Cong L."/>
            <person name="Lin L."/>
            <person name="Yin J."/>
            <person name="Geng J."/>
            <person name="Li G."/>
            <person name="Shi J."/>
            <person name="Liu J."/>
            <person name="Lv H."/>
            <person name="Li J."/>
            <person name="Wang J."/>
            <person name="Deng Y."/>
            <person name="Ran L."/>
            <person name="Shi X."/>
            <person name="Wang X."/>
            <person name="Wu Q."/>
            <person name="Li C."/>
            <person name="Ren X."/>
            <person name="Wang J."/>
            <person name="Wang X."/>
            <person name="Li D."/>
            <person name="Liu D."/>
            <person name="Zhang X."/>
            <person name="Ji Z."/>
            <person name="Zhao W."/>
            <person name="Sun Y."/>
            <person name="Zhang Z."/>
            <person name="Bao J."/>
            <person name="Han Y."/>
            <person name="Dong L."/>
            <person name="Ji J."/>
            <person name="Chen P."/>
            <person name="Wu S."/>
            <person name="Liu J."/>
            <person name="Xiao Y."/>
            <person name="Bu D."/>
            <person name="Tan J."/>
            <person name="Yang L."/>
            <person name="Ye C."/>
            <person name="Zhang J."/>
            <person name="Xu J."/>
            <person name="Zhou Y."/>
            <person name="Yu Y."/>
            <person name="Zhang B."/>
            <person name="Zhuang S."/>
            <person name="Wei H."/>
            <person name="Liu B."/>
            <person name="Lei M."/>
            <person name="Yu H."/>
            <person name="Li Y."/>
            <person name="Xu H."/>
            <person name="Wei S."/>
            <person name="He X."/>
            <person name="Fang L."/>
            <person name="Zhang Z."/>
            <person name="Zhang Y."/>
            <person name="Huang X."/>
            <person name="Su Z."/>
            <person name="Tong W."/>
            <person name="Li J."/>
            <person name="Tong Z."/>
            <person name="Li S."/>
            <person name="Ye J."/>
            <person name="Wang L."/>
            <person name="Fang L."/>
            <person name="Lei T."/>
            <person name="Chen C.-S."/>
            <person name="Chen H.-C."/>
            <person name="Xu Z."/>
            <person name="Li H."/>
            <person name="Huang H."/>
            <person name="Zhang F."/>
            <person name="Xu H."/>
            <person name="Li N."/>
            <person name="Zhao C."/>
            <person name="Li S."/>
            <person name="Dong L."/>
            <person name="Huang Y."/>
            <person name="Li L."/>
            <person name="Xi Y."/>
            <person name="Qi Q."/>
            <person name="Li W."/>
            <person name="Zhang B."/>
            <person name="Hu W."/>
            <person name="Zhang Y."/>
            <person name="Tian X."/>
            <person name="Jiao Y."/>
            <person name="Liang X."/>
            <person name="Jin J."/>
            <person name="Gao L."/>
            <person name="Zheng W."/>
            <person name="Hao B."/>
            <person name="Liu S.-M."/>
            <person name="Wang W."/>
            <person name="Yuan L."/>
            <person name="Cao M."/>
            <person name="McDermott J."/>
            <person name="Samudrala R."/>
            <person name="Wang J."/>
            <person name="Wong G.K.-S."/>
            <person name="Yang H."/>
        </authorList>
    </citation>
    <scope>NUCLEOTIDE SEQUENCE [LARGE SCALE GENOMIC DNA]</scope>
    <source>
        <strain>cv. 93-11</strain>
    </source>
</reference>
<evidence type="ECO:0000250" key="1"/>
<evidence type="ECO:0000255" key="2">
    <source>
        <dbReference type="PROSITE-ProRule" id="PRU00159"/>
    </source>
</evidence>
<evidence type="ECO:0000255" key="3">
    <source>
        <dbReference type="PROSITE-ProRule" id="PRU10027"/>
    </source>
</evidence>
<evidence type="ECO:0000256" key="4">
    <source>
        <dbReference type="SAM" id="MobiDB-lite"/>
    </source>
</evidence>
<evidence type="ECO:0000305" key="5"/>